<keyword id="KW-0963">Cytoplasm</keyword>
<keyword id="KW-0620">Polyamine biosynthesis</keyword>
<keyword id="KW-1185">Reference proteome</keyword>
<keyword id="KW-0745">Spermidine biosynthesis</keyword>
<keyword id="KW-0808">Transferase</keyword>
<organism>
    <name type="scientific">Shigella boydii serotype 18 (strain CDC 3083-94 / BS512)</name>
    <dbReference type="NCBI Taxonomy" id="344609"/>
    <lineage>
        <taxon>Bacteria</taxon>
        <taxon>Pseudomonadati</taxon>
        <taxon>Pseudomonadota</taxon>
        <taxon>Gammaproteobacteria</taxon>
        <taxon>Enterobacterales</taxon>
        <taxon>Enterobacteriaceae</taxon>
        <taxon>Shigella</taxon>
    </lineage>
</organism>
<name>SPEE_SHIB3</name>
<sequence>MAEKKQWHETLHDQFGQYFAVDNVLYHEKTDHQDLIIFENAAFGRVMALDGVVQTTERDEFIYHEMMTHVPLLAHGHAKHVLIIGGGDGAMLREVTRHKNVESITMVEIDAGVVSFCRQYLPNHNAGSYDDPRFKLVIDDGVNFVNQTSQTFDVIISDCTDPIGPGESLFTSAFYEGCKRCLNPSGIFVAQNGVCFLQQEEAIDSHRKLSHYFSDVGFYQTAIPTYYGGIMTFAWATDNDALRHLSTEIIQARFLASGLKCRYYNPAIHTAAFALPQYLQDALASQPS</sequence>
<dbReference type="EC" id="2.5.1.16" evidence="1"/>
<dbReference type="EMBL" id="CP001063">
    <property type="protein sequence ID" value="ACD07905.1"/>
    <property type="molecule type" value="Genomic_DNA"/>
</dbReference>
<dbReference type="RefSeq" id="WP_000818421.1">
    <property type="nucleotide sequence ID" value="NC_010658.1"/>
</dbReference>
<dbReference type="SMR" id="B2U2X0"/>
<dbReference type="STRING" id="344609.SbBS512_E0114"/>
<dbReference type="KEGG" id="sbc:SbBS512_E0114"/>
<dbReference type="HOGENOM" id="CLU_048199_0_0_6"/>
<dbReference type="UniPathway" id="UPA00248">
    <property type="reaction ID" value="UER00314"/>
</dbReference>
<dbReference type="Proteomes" id="UP000001030">
    <property type="component" value="Chromosome"/>
</dbReference>
<dbReference type="GO" id="GO:0005829">
    <property type="term" value="C:cytosol"/>
    <property type="evidence" value="ECO:0007669"/>
    <property type="project" value="TreeGrafter"/>
</dbReference>
<dbReference type="GO" id="GO:0004766">
    <property type="term" value="F:spermidine synthase activity"/>
    <property type="evidence" value="ECO:0007669"/>
    <property type="project" value="UniProtKB-UniRule"/>
</dbReference>
<dbReference type="GO" id="GO:0008295">
    <property type="term" value="P:spermidine biosynthetic process"/>
    <property type="evidence" value="ECO:0007669"/>
    <property type="project" value="UniProtKB-UniRule"/>
</dbReference>
<dbReference type="CDD" id="cd02440">
    <property type="entry name" value="AdoMet_MTases"/>
    <property type="match status" value="1"/>
</dbReference>
<dbReference type="FunFam" id="2.30.140.10:FF:000002">
    <property type="entry name" value="Polyamine aminopropyltransferase"/>
    <property type="match status" value="1"/>
</dbReference>
<dbReference type="FunFam" id="3.40.50.150:FF:000026">
    <property type="entry name" value="Polyamine aminopropyltransferase"/>
    <property type="match status" value="1"/>
</dbReference>
<dbReference type="Gene3D" id="2.30.140.10">
    <property type="entry name" value="Spermidine synthase, tetramerisation domain"/>
    <property type="match status" value="1"/>
</dbReference>
<dbReference type="Gene3D" id="3.40.50.150">
    <property type="entry name" value="Vaccinia Virus protein VP39"/>
    <property type="match status" value="1"/>
</dbReference>
<dbReference type="HAMAP" id="MF_00198">
    <property type="entry name" value="Spermidine_synth"/>
    <property type="match status" value="1"/>
</dbReference>
<dbReference type="InterPro" id="IPR030374">
    <property type="entry name" value="PABS"/>
</dbReference>
<dbReference type="InterPro" id="IPR030373">
    <property type="entry name" value="PABS_CS"/>
</dbReference>
<dbReference type="InterPro" id="IPR029063">
    <property type="entry name" value="SAM-dependent_MTases_sf"/>
</dbReference>
<dbReference type="InterPro" id="IPR001045">
    <property type="entry name" value="Spermi_synthase"/>
</dbReference>
<dbReference type="InterPro" id="IPR035246">
    <property type="entry name" value="Spermidine_synt_N"/>
</dbReference>
<dbReference type="InterPro" id="IPR037163">
    <property type="entry name" value="Spermidine_synt_N_sf"/>
</dbReference>
<dbReference type="NCBIfam" id="NF037959">
    <property type="entry name" value="MFS_SpdSyn"/>
    <property type="match status" value="1"/>
</dbReference>
<dbReference type="NCBIfam" id="NF002010">
    <property type="entry name" value="PRK00811.1"/>
    <property type="match status" value="1"/>
</dbReference>
<dbReference type="NCBIfam" id="TIGR00417">
    <property type="entry name" value="speE"/>
    <property type="match status" value="1"/>
</dbReference>
<dbReference type="PANTHER" id="PTHR11558:SF11">
    <property type="entry name" value="SPERMIDINE SYNTHASE"/>
    <property type="match status" value="1"/>
</dbReference>
<dbReference type="PANTHER" id="PTHR11558">
    <property type="entry name" value="SPERMIDINE/SPERMINE SYNTHASE"/>
    <property type="match status" value="1"/>
</dbReference>
<dbReference type="Pfam" id="PF17284">
    <property type="entry name" value="Spermine_synt_N"/>
    <property type="match status" value="1"/>
</dbReference>
<dbReference type="Pfam" id="PF01564">
    <property type="entry name" value="Spermine_synth"/>
    <property type="match status" value="1"/>
</dbReference>
<dbReference type="SUPFAM" id="SSF53335">
    <property type="entry name" value="S-adenosyl-L-methionine-dependent methyltransferases"/>
    <property type="match status" value="1"/>
</dbReference>
<dbReference type="PROSITE" id="PS01330">
    <property type="entry name" value="PABS_1"/>
    <property type="match status" value="1"/>
</dbReference>
<dbReference type="PROSITE" id="PS51006">
    <property type="entry name" value="PABS_2"/>
    <property type="match status" value="1"/>
</dbReference>
<protein>
    <recommendedName>
        <fullName evidence="1">Polyamine aminopropyltransferase</fullName>
    </recommendedName>
    <alternativeName>
        <fullName evidence="1">Putrescine aminopropyltransferase</fullName>
        <shortName evidence="1">PAPT</shortName>
    </alternativeName>
    <alternativeName>
        <fullName evidence="1">Spermidine synthase</fullName>
        <shortName evidence="1">SPDS</shortName>
        <shortName evidence="1">SPDSY</shortName>
        <ecNumber evidence="1">2.5.1.16</ecNumber>
    </alternativeName>
</protein>
<evidence type="ECO:0000255" key="1">
    <source>
        <dbReference type="HAMAP-Rule" id="MF_00198"/>
    </source>
</evidence>
<feature type="chain" id="PRO_1000099301" description="Polyamine aminopropyltransferase">
    <location>
        <begin position="1"/>
        <end position="288"/>
    </location>
</feature>
<feature type="domain" description="PABS" evidence="1">
    <location>
        <begin position="9"/>
        <end position="238"/>
    </location>
</feature>
<feature type="active site" description="Proton acceptor" evidence="1">
    <location>
        <position position="158"/>
    </location>
</feature>
<feature type="binding site" evidence="1">
    <location>
        <position position="33"/>
    </location>
    <ligand>
        <name>S-methyl-5'-thioadenosine</name>
        <dbReference type="ChEBI" id="CHEBI:17509"/>
    </ligand>
</feature>
<feature type="binding site" evidence="1">
    <location>
        <position position="64"/>
    </location>
    <ligand>
        <name>spermidine</name>
        <dbReference type="ChEBI" id="CHEBI:57834"/>
    </ligand>
</feature>
<feature type="binding site" evidence="1">
    <location>
        <position position="88"/>
    </location>
    <ligand>
        <name>spermidine</name>
        <dbReference type="ChEBI" id="CHEBI:57834"/>
    </ligand>
</feature>
<feature type="binding site" evidence="1">
    <location>
        <position position="108"/>
    </location>
    <ligand>
        <name>S-methyl-5'-thioadenosine</name>
        <dbReference type="ChEBI" id="CHEBI:17509"/>
    </ligand>
</feature>
<feature type="binding site" evidence="1">
    <location>
        <begin position="140"/>
        <end position="141"/>
    </location>
    <ligand>
        <name>S-methyl-5'-thioadenosine</name>
        <dbReference type="ChEBI" id="CHEBI:17509"/>
    </ligand>
</feature>
<feature type="binding site" evidence="1">
    <location>
        <begin position="158"/>
        <end position="161"/>
    </location>
    <ligand>
        <name>spermidine</name>
        <dbReference type="ChEBI" id="CHEBI:57834"/>
    </ligand>
</feature>
<feature type="binding site" evidence="1">
    <location>
        <position position="165"/>
    </location>
    <ligand>
        <name>S-methyl-5'-thioadenosine</name>
        <dbReference type="ChEBI" id="CHEBI:17509"/>
    </ligand>
</feature>
<accession>B2U2X0</accession>
<comment type="function">
    <text evidence="1">Catalyzes the irreversible transfer of a propylamine group from the amino donor S-adenosylmethioninamine (decarboxy-AdoMet) to putrescine (1,4-diaminobutane) to yield spermidine.</text>
</comment>
<comment type="catalytic activity">
    <reaction evidence="1">
        <text>S-adenosyl 3-(methylsulfanyl)propylamine + putrescine = S-methyl-5'-thioadenosine + spermidine + H(+)</text>
        <dbReference type="Rhea" id="RHEA:12721"/>
        <dbReference type="ChEBI" id="CHEBI:15378"/>
        <dbReference type="ChEBI" id="CHEBI:17509"/>
        <dbReference type="ChEBI" id="CHEBI:57443"/>
        <dbReference type="ChEBI" id="CHEBI:57834"/>
        <dbReference type="ChEBI" id="CHEBI:326268"/>
        <dbReference type="EC" id="2.5.1.16"/>
    </reaction>
</comment>
<comment type="pathway">
    <text evidence="1">Amine and polyamine biosynthesis; spermidine biosynthesis; spermidine from putrescine: step 1/1.</text>
</comment>
<comment type="subunit">
    <text evidence="1">Homodimer or homotetramer.</text>
</comment>
<comment type="subcellular location">
    <subcellularLocation>
        <location evidence="1">Cytoplasm</location>
    </subcellularLocation>
</comment>
<comment type="similarity">
    <text evidence="1">Belongs to the spermidine/spermine synthase family.</text>
</comment>
<proteinExistence type="inferred from homology"/>
<reference key="1">
    <citation type="submission" date="2008-05" db="EMBL/GenBank/DDBJ databases">
        <title>Complete sequence of Shigella boydii serotype 18 strain BS512.</title>
        <authorList>
            <person name="Rasko D.A."/>
            <person name="Rosovitz M."/>
            <person name="Maurelli A.T."/>
            <person name="Myers G."/>
            <person name="Seshadri R."/>
            <person name="Cer R."/>
            <person name="Jiang L."/>
            <person name="Ravel J."/>
            <person name="Sebastian Y."/>
        </authorList>
    </citation>
    <scope>NUCLEOTIDE SEQUENCE [LARGE SCALE GENOMIC DNA]</scope>
    <source>
        <strain>CDC 3083-94 / BS512</strain>
    </source>
</reference>
<gene>
    <name evidence="1" type="primary">speE</name>
    <name type="ordered locus">SbBS512_E0114</name>
</gene>